<evidence type="ECO:0000250" key="1"/>
<evidence type="ECO:0000250" key="2">
    <source>
        <dbReference type="UniProtKB" id="Q13043"/>
    </source>
</evidence>
<evidence type="ECO:0000250" key="3">
    <source>
        <dbReference type="UniProtKB" id="Q9JI11"/>
    </source>
</evidence>
<evidence type="ECO:0000255" key="4"/>
<evidence type="ECO:0000255" key="5">
    <source>
        <dbReference type="PROSITE-ProRule" id="PRU00159"/>
    </source>
</evidence>
<evidence type="ECO:0000255" key="6">
    <source>
        <dbReference type="PROSITE-ProRule" id="PRU00310"/>
    </source>
</evidence>
<evidence type="ECO:0000305" key="7"/>
<protein>
    <recommendedName>
        <fullName>Serine/threonine-protein kinase 4</fullName>
        <ecNumber>2.7.11.1</ecNumber>
    </recommendedName>
    <component>
        <recommendedName>
            <fullName>Serine/threonine-protein kinase 4 37kDa subunit</fullName>
            <shortName>MST1/N</shortName>
        </recommendedName>
    </component>
    <component>
        <recommendedName>
            <fullName>Serine/threonine-protein kinase 4 18kDa subunit</fullName>
            <shortName>MST1/C</shortName>
        </recommendedName>
    </component>
</protein>
<organism>
    <name type="scientific">Xenopus tropicalis</name>
    <name type="common">Western clawed frog</name>
    <name type="synonym">Silurana tropicalis</name>
    <dbReference type="NCBI Taxonomy" id="8364"/>
    <lineage>
        <taxon>Eukaryota</taxon>
        <taxon>Metazoa</taxon>
        <taxon>Chordata</taxon>
        <taxon>Craniata</taxon>
        <taxon>Vertebrata</taxon>
        <taxon>Euteleostomi</taxon>
        <taxon>Amphibia</taxon>
        <taxon>Batrachia</taxon>
        <taxon>Anura</taxon>
        <taxon>Pipoidea</taxon>
        <taxon>Pipidae</taxon>
        <taxon>Xenopodinae</taxon>
        <taxon>Xenopus</taxon>
        <taxon>Silurana</taxon>
    </lineage>
</organism>
<feature type="chain" id="PRO_0000246630" description="Serine/threonine-protein kinase 4">
    <location>
        <begin position="1"/>
        <end position="485"/>
    </location>
</feature>
<feature type="chain" id="PRO_0000413751" description="Serine/threonine-protein kinase 4 37kDa subunit" evidence="1">
    <location>
        <begin position="1"/>
        <end position="326"/>
    </location>
</feature>
<feature type="chain" id="PRO_0000413752" description="Serine/threonine-protein kinase 4 18kDa subunit" evidence="1">
    <location>
        <begin position="327"/>
        <end position="485"/>
    </location>
</feature>
<feature type="domain" description="Protein kinase" evidence="5">
    <location>
        <begin position="30"/>
        <end position="281"/>
    </location>
</feature>
<feature type="domain" description="SARAH" evidence="6">
    <location>
        <begin position="431"/>
        <end position="478"/>
    </location>
</feature>
<feature type="coiled-coil region" evidence="4">
    <location>
        <begin position="287"/>
        <end position="313"/>
    </location>
</feature>
<feature type="active site" description="Proton acceptor" evidence="5">
    <location>
        <position position="149"/>
    </location>
</feature>
<feature type="binding site" evidence="5">
    <location>
        <begin position="36"/>
        <end position="44"/>
    </location>
    <ligand>
        <name>ATP</name>
        <dbReference type="ChEBI" id="CHEBI:30616"/>
    </ligand>
</feature>
<feature type="binding site" evidence="5">
    <location>
        <position position="59"/>
    </location>
    <ligand>
        <name>ATP</name>
        <dbReference type="ChEBI" id="CHEBI:30616"/>
    </ligand>
</feature>
<feature type="site" description="Cleavage; by caspase-3" evidence="1">
    <location>
        <begin position="326"/>
        <end position="327"/>
    </location>
</feature>
<feature type="modified residue" description="Phosphothreonine; by autocatalysis" evidence="1">
    <location>
        <position position="183"/>
    </location>
</feature>
<gene>
    <name type="primary">stk4</name>
    <name type="ORF">TTpA008i22.1</name>
</gene>
<name>STK4_XENTR</name>
<accession>Q6P3Q4</accession>
<accession>Q28EH4</accession>
<proteinExistence type="evidence at transcript level"/>
<keyword id="KW-0067">ATP-binding</keyword>
<keyword id="KW-0175">Coiled coil</keyword>
<keyword id="KW-0963">Cytoplasm</keyword>
<keyword id="KW-0418">Kinase</keyword>
<keyword id="KW-0547">Nucleotide-binding</keyword>
<keyword id="KW-0539">Nucleus</keyword>
<keyword id="KW-0597">Phosphoprotein</keyword>
<keyword id="KW-1185">Reference proteome</keyword>
<keyword id="KW-0723">Serine/threonine-protein kinase</keyword>
<keyword id="KW-0808">Transferase</keyword>
<reference key="1">
    <citation type="submission" date="2003-12" db="EMBL/GenBank/DDBJ databases">
        <authorList>
            <consortium name="NIH - Xenopus Gene Collection (XGC) project"/>
        </authorList>
    </citation>
    <scope>NUCLEOTIDE SEQUENCE [LARGE SCALE MRNA]</scope>
    <source>
        <tissue>Embryo</tissue>
    </source>
</reference>
<reference key="2">
    <citation type="submission" date="2006-03" db="EMBL/GenBank/DDBJ databases">
        <authorList>
            <consortium name="Sanger Xenopus tropicalis EST/cDNA project"/>
        </authorList>
    </citation>
    <scope>NUCLEOTIDE SEQUENCE [LARGE SCALE MRNA] OF 100-485</scope>
    <source>
        <tissue>Tadpole</tissue>
    </source>
</reference>
<sequence length="485" mass="55397">METVQLRNNPRRHLKKLSEESLNKQPEEVFDVLEKLGEGSYGSVYKASHKETSQIVAIKQIPVESDLQEIIKEIAIMQQCDSLHVVKYYGSYFKNTDLWIVMEFCGGGSISDIIRLRKQTLKEDETATILQSTLKGLEYLHFMRKIHRDIKAGNILLNSEGTAKLADFGVAGQLTDTMAKRNTVIGTPFWMAPEVIQEIGYNCVADIWSLGITAIEMAEGKPPYAEIHPMRAIFMIPSNPPPTFRKPELWSKDFVDFINLCLVKNPELRSSATELLQHPFIKTAKGESILRHLINEAQDAKLKRTELKQREVEPEEEENADEDEADVGTMVQAGSKDLNTMKEFSTMNEAADCTMVEKDKLNTQMGTMLINDEDEEETGTMKQCTEPVQPAKPSFLEYFEQKENQFGTPEKTTPAPSTDPSEWKIPLNGDYSFLKDWSVTELQLRLNSLDPMMEQEIEEIHHKYQAKRQPILEAIESKKRRQQNF</sequence>
<dbReference type="EC" id="2.7.11.1"/>
<dbReference type="EMBL" id="BC063903">
    <property type="protein sequence ID" value="AAH63903.1"/>
    <property type="molecule type" value="mRNA"/>
</dbReference>
<dbReference type="EMBL" id="CR848251">
    <property type="protein sequence ID" value="CAJ83147.1"/>
    <property type="molecule type" value="mRNA"/>
</dbReference>
<dbReference type="RefSeq" id="NP_989249.1">
    <property type="nucleotide sequence ID" value="NM_203918.1"/>
</dbReference>
<dbReference type="SMR" id="Q6P3Q4"/>
<dbReference type="FunCoup" id="Q6P3Q4">
    <property type="interactions" value="4253"/>
</dbReference>
<dbReference type="STRING" id="8364.ENSXETP00000010234"/>
<dbReference type="PaxDb" id="8364-ENSXETP00000049383"/>
<dbReference type="DNASU" id="394860"/>
<dbReference type="GeneID" id="394860"/>
<dbReference type="KEGG" id="xtr:394860"/>
<dbReference type="AGR" id="Xenbase:XB-GENE-955920"/>
<dbReference type="CTD" id="6789"/>
<dbReference type="Xenbase" id="XB-GENE-955920">
    <property type="gene designation" value="stk4"/>
</dbReference>
<dbReference type="eggNOG" id="KOG0574">
    <property type="taxonomic scope" value="Eukaryota"/>
</dbReference>
<dbReference type="HOGENOM" id="CLU_000288_63_23_1"/>
<dbReference type="InParanoid" id="Q6P3Q4"/>
<dbReference type="OMA" id="QCDSLHV"/>
<dbReference type="OrthoDB" id="8693905at2759"/>
<dbReference type="PhylomeDB" id="Q6P3Q4"/>
<dbReference type="TreeFam" id="TF354217"/>
<dbReference type="Reactome" id="R-XTR-2028269">
    <property type="pathway name" value="Signaling by Hippo"/>
</dbReference>
<dbReference type="Proteomes" id="UP000008143">
    <property type="component" value="Chromosome 10"/>
</dbReference>
<dbReference type="ExpressionAtlas" id="Q6P3Q4">
    <property type="expression patterns" value="baseline"/>
</dbReference>
<dbReference type="GO" id="GO:0005737">
    <property type="term" value="C:cytoplasm"/>
    <property type="evidence" value="ECO:0000250"/>
    <property type="project" value="UniProtKB"/>
</dbReference>
<dbReference type="GO" id="GO:0005634">
    <property type="term" value="C:nucleus"/>
    <property type="evidence" value="ECO:0000250"/>
    <property type="project" value="UniProtKB"/>
</dbReference>
<dbReference type="GO" id="GO:0005524">
    <property type="term" value="F:ATP binding"/>
    <property type="evidence" value="ECO:0007669"/>
    <property type="project" value="UniProtKB-KW"/>
</dbReference>
<dbReference type="GO" id="GO:0106310">
    <property type="term" value="F:protein serine kinase activity"/>
    <property type="evidence" value="ECO:0007669"/>
    <property type="project" value="RHEA"/>
</dbReference>
<dbReference type="GO" id="GO:0004674">
    <property type="term" value="F:protein serine/threonine kinase activity"/>
    <property type="evidence" value="ECO:0000250"/>
    <property type="project" value="UniProtKB"/>
</dbReference>
<dbReference type="GO" id="GO:0006915">
    <property type="term" value="P:apoptotic process"/>
    <property type="evidence" value="ECO:0000250"/>
    <property type="project" value="UniProtKB"/>
</dbReference>
<dbReference type="GO" id="GO:0035329">
    <property type="term" value="P:hippo signaling"/>
    <property type="evidence" value="ECO:0000250"/>
    <property type="project" value="UniProtKB"/>
</dbReference>
<dbReference type="GO" id="GO:0051262">
    <property type="term" value="P:protein tetramerization"/>
    <property type="evidence" value="ECO:0007669"/>
    <property type="project" value="InterPro"/>
</dbReference>
<dbReference type="CDD" id="cd21887">
    <property type="entry name" value="SARAH_MST1"/>
    <property type="match status" value="1"/>
</dbReference>
<dbReference type="CDD" id="cd06612">
    <property type="entry name" value="STKc_MST1_2"/>
    <property type="match status" value="1"/>
</dbReference>
<dbReference type="FunFam" id="3.30.200.20:FF:000040">
    <property type="entry name" value="Dual specificity mitogen-activated protein kinase kinase"/>
    <property type="match status" value="1"/>
</dbReference>
<dbReference type="FunFam" id="1.10.510.10:FF:000075">
    <property type="entry name" value="Serine/threonine-protein kinase 3"/>
    <property type="match status" value="1"/>
</dbReference>
<dbReference type="FunFam" id="4.10.170.10:FF:000002">
    <property type="entry name" value="serine/threonine-protein kinase 3"/>
    <property type="match status" value="1"/>
</dbReference>
<dbReference type="Gene3D" id="1.10.287.4270">
    <property type="match status" value="1"/>
</dbReference>
<dbReference type="Gene3D" id="4.10.170.10">
    <property type="entry name" value="p53-like tetramerisation domain"/>
    <property type="match status" value="1"/>
</dbReference>
<dbReference type="Gene3D" id="1.10.510.10">
    <property type="entry name" value="Transferase(Phosphotransferase) domain 1"/>
    <property type="match status" value="1"/>
</dbReference>
<dbReference type="InterPro" id="IPR011009">
    <property type="entry name" value="Kinase-like_dom_sf"/>
</dbReference>
<dbReference type="InterPro" id="IPR024205">
    <property type="entry name" value="Mst1_2_SARAH_domain"/>
</dbReference>
<dbReference type="InterPro" id="IPR036674">
    <property type="entry name" value="p53_tetramer_sf"/>
</dbReference>
<dbReference type="InterPro" id="IPR000719">
    <property type="entry name" value="Prot_kinase_dom"/>
</dbReference>
<dbReference type="InterPro" id="IPR017441">
    <property type="entry name" value="Protein_kinase_ATP_BS"/>
</dbReference>
<dbReference type="InterPro" id="IPR011524">
    <property type="entry name" value="SARAH_dom"/>
</dbReference>
<dbReference type="InterPro" id="IPR050629">
    <property type="entry name" value="STE20/SPS1-PAK"/>
</dbReference>
<dbReference type="PANTHER" id="PTHR48012:SF2">
    <property type="entry name" value="STERILE20-LIKE KINASE, ISOFORM B"/>
    <property type="match status" value="1"/>
</dbReference>
<dbReference type="PANTHER" id="PTHR48012">
    <property type="entry name" value="STERILE20-LIKE KINASE, ISOFORM B-RELATED"/>
    <property type="match status" value="1"/>
</dbReference>
<dbReference type="Pfam" id="PF11629">
    <property type="entry name" value="Mst1_SARAH"/>
    <property type="match status" value="1"/>
</dbReference>
<dbReference type="Pfam" id="PF00069">
    <property type="entry name" value="Pkinase"/>
    <property type="match status" value="1"/>
</dbReference>
<dbReference type="SMART" id="SM00220">
    <property type="entry name" value="S_TKc"/>
    <property type="match status" value="1"/>
</dbReference>
<dbReference type="SUPFAM" id="SSF56112">
    <property type="entry name" value="Protein kinase-like (PK-like)"/>
    <property type="match status" value="1"/>
</dbReference>
<dbReference type="PROSITE" id="PS00107">
    <property type="entry name" value="PROTEIN_KINASE_ATP"/>
    <property type="match status" value="1"/>
</dbReference>
<dbReference type="PROSITE" id="PS50011">
    <property type="entry name" value="PROTEIN_KINASE_DOM"/>
    <property type="match status" value="1"/>
</dbReference>
<dbReference type="PROSITE" id="PS50951">
    <property type="entry name" value="SARAH"/>
    <property type="match status" value="1"/>
</dbReference>
<comment type="function">
    <text evidence="2 3">Stress-activated, pro-apoptotic kinase which, following caspase-cleavage, enters the nucleus and induces chromatin condensation followed by internucleosomal DNA fragmentation. Key component of the Hippo signaling pathway which plays a pivotal role in organ size control and tumor suppression by restricting proliferation and promoting apoptosis. The core of this pathway is composed of a kinase cascade wherein stk3/mst2 and stk4/mst1, in complex with its regulatory protein sav1, phosphorylates and activates lats1/2 in complex with its regulatory protein mob1, which in turn phosphorylates and inactivates yap1 oncoprotein and wwtr1/taz. Phosphorylation of yap1 by lats2 inhibits its translocation into the nucleus to regulate cellular genes important for cell proliferation, cell death, and cell migration. Phosphorylates 'Ser-14' of histone H2B (H2BS14ph) during apoptosis.</text>
</comment>
<comment type="catalytic activity">
    <reaction evidence="2">
        <text>L-seryl-[protein] + ATP = O-phospho-L-seryl-[protein] + ADP + H(+)</text>
        <dbReference type="Rhea" id="RHEA:17989"/>
        <dbReference type="Rhea" id="RHEA-COMP:9863"/>
        <dbReference type="Rhea" id="RHEA-COMP:11604"/>
        <dbReference type="ChEBI" id="CHEBI:15378"/>
        <dbReference type="ChEBI" id="CHEBI:29999"/>
        <dbReference type="ChEBI" id="CHEBI:30616"/>
        <dbReference type="ChEBI" id="CHEBI:83421"/>
        <dbReference type="ChEBI" id="CHEBI:456216"/>
        <dbReference type="EC" id="2.7.11.1"/>
    </reaction>
    <physiologicalReaction direction="left-to-right" evidence="2">
        <dbReference type="Rhea" id="RHEA:17990"/>
    </physiologicalReaction>
</comment>
<comment type="catalytic activity">
    <reaction evidence="2">
        <text>L-threonyl-[protein] + ATP = O-phospho-L-threonyl-[protein] + ADP + H(+)</text>
        <dbReference type="Rhea" id="RHEA:46608"/>
        <dbReference type="Rhea" id="RHEA-COMP:11060"/>
        <dbReference type="Rhea" id="RHEA-COMP:11605"/>
        <dbReference type="ChEBI" id="CHEBI:15378"/>
        <dbReference type="ChEBI" id="CHEBI:30013"/>
        <dbReference type="ChEBI" id="CHEBI:30616"/>
        <dbReference type="ChEBI" id="CHEBI:61977"/>
        <dbReference type="ChEBI" id="CHEBI:456216"/>
        <dbReference type="EC" id="2.7.11.1"/>
    </reaction>
    <physiologicalReaction direction="left-to-right" evidence="2">
        <dbReference type="Rhea" id="RHEA:46609"/>
    </physiologicalReaction>
</comment>
<comment type="cofactor">
    <cofactor evidence="1">
        <name>Mg(2+)</name>
        <dbReference type="ChEBI" id="CHEBI:18420"/>
    </cofactor>
</comment>
<comment type="activity regulation">
    <text evidence="1">The C-terminal non-catalytic region inhibits the kinase activity, the enzyme is activated by caspase-cleavage. Homodimerization and autophosphorylation of Thr-183 is also required for full activation (By similarity).</text>
</comment>
<comment type="subunit">
    <text evidence="1">Homodimer; mediated via the coiled-coil region.</text>
</comment>
<comment type="subcellular location">
    <subcellularLocation>
        <location evidence="1">Cytoplasm</location>
    </subcellularLocation>
    <subcellularLocation>
        <location evidence="1">Nucleus</location>
    </subcellularLocation>
    <text evidence="1">The caspase-cleaved form cycles between nucleus and cytoplasm.</text>
</comment>
<comment type="PTM">
    <text evidence="1">Autophosphorylated on Thr-183.</text>
</comment>
<comment type="PTM">
    <text evidence="1">Proteolytically cleaved by caspase-3 during apoptosis at Asp-326 resulting in a 37 kDa form. Proteolytic cleavage results in kinase activation and nuclear translocation of the truncated form (MST1/N) (By similarity).</text>
</comment>
<comment type="similarity">
    <text evidence="7">Belongs to the protein kinase superfamily. STE Ser/Thr protein kinase family. STE20 subfamily.</text>
</comment>